<feature type="chain" id="PRO_1000066894" description="HTH-type transcriptional regulator HdfR">
    <location>
        <begin position="1"/>
        <end position="279"/>
    </location>
</feature>
<feature type="domain" description="HTH lysR-type" evidence="1">
    <location>
        <begin position="1"/>
        <end position="58"/>
    </location>
</feature>
<feature type="DNA-binding region" description="H-T-H motif" evidence="1">
    <location>
        <begin position="18"/>
        <end position="37"/>
    </location>
</feature>
<sequence length="279" mass="31790">MDTELLKTFLEVSRTRHFGRAAESLYLTQSAVSFRIRQLENQLGVNLFTRHRNNIRLTAAGEKLLPYAETLMSTWQAARKEVAHTSRHNEFSIGASASLWECMLNQWLGRLYQNQDVHTGLQFEARIAQRQSLVKQLHERQLDLLITTEAPKMDEFCSQLLGYFTLALYTSAPSKLKGDLNYLRLEWGPDFQQHEAGLIGADEVPILTTSSAELAQQQIAMLNGCTWLPVSWARKKGGLHTVVDSTTLSRPLYAIWLQNSDKNALIRDLLKINVLDEVY</sequence>
<name>HDFR_ECOL5</name>
<reference key="1">
    <citation type="journal article" date="2006" name="Mol. Microbiol.">
        <title>Role of pathogenicity island-associated integrases in the genome plasticity of uropathogenic Escherichia coli strain 536.</title>
        <authorList>
            <person name="Hochhut B."/>
            <person name="Wilde C."/>
            <person name="Balling G."/>
            <person name="Middendorf B."/>
            <person name="Dobrindt U."/>
            <person name="Brzuszkiewicz E."/>
            <person name="Gottschalk G."/>
            <person name="Carniel E."/>
            <person name="Hacker J."/>
        </authorList>
    </citation>
    <scope>NUCLEOTIDE SEQUENCE [LARGE SCALE GENOMIC DNA]</scope>
    <source>
        <strain>536 / UPEC</strain>
    </source>
</reference>
<comment type="function">
    <text evidence="1">Negatively regulates the transcription of the flagellar master operon flhDC by binding to the upstream region of the operon.</text>
</comment>
<comment type="similarity">
    <text evidence="2">Belongs to the LysR transcriptional regulatory family.</text>
</comment>
<gene>
    <name evidence="1" type="primary">hdfR</name>
    <name type="ordered locus">ECP_3959</name>
</gene>
<proteinExistence type="inferred from homology"/>
<organism>
    <name type="scientific">Escherichia coli O6:K15:H31 (strain 536 / UPEC)</name>
    <dbReference type="NCBI Taxonomy" id="362663"/>
    <lineage>
        <taxon>Bacteria</taxon>
        <taxon>Pseudomonadati</taxon>
        <taxon>Pseudomonadota</taxon>
        <taxon>Gammaproteobacteria</taxon>
        <taxon>Enterobacterales</taxon>
        <taxon>Enterobacteriaceae</taxon>
        <taxon>Escherichia</taxon>
    </lineage>
</organism>
<accession>Q0TAV4</accession>
<protein>
    <recommendedName>
        <fullName evidence="1">HTH-type transcriptional regulator HdfR</fullName>
    </recommendedName>
    <alternativeName>
        <fullName evidence="1">H-NS-dependent flhDC regulator</fullName>
    </alternativeName>
</protein>
<evidence type="ECO:0000255" key="1">
    <source>
        <dbReference type="HAMAP-Rule" id="MF_01233"/>
    </source>
</evidence>
<evidence type="ECO:0000305" key="2"/>
<dbReference type="EMBL" id="CP000247">
    <property type="protein sequence ID" value="ABG71925.1"/>
    <property type="molecule type" value="Genomic_DNA"/>
</dbReference>
<dbReference type="RefSeq" id="WP_000379257.1">
    <property type="nucleotide sequence ID" value="NC_008253.1"/>
</dbReference>
<dbReference type="SMR" id="Q0TAV4"/>
<dbReference type="KEGG" id="ecp:ECP_3959"/>
<dbReference type="HOGENOM" id="CLU_039613_8_2_6"/>
<dbReference type="Proteomes" id="UP000009182">
    <property type="component" value="Chromosome"/>
</dbReference>
<dbReference type="GO" id="GO:0003677">
    <property type="term" value="F:DNA binding"/>
    <property type="evidence" value="ECO:0007669"/>
    <property type="project" value="UniProtKB-KW"/>
</dbReference>
<dbReference type="GO" id="GO:0003700">
    <property type="term" value="F:DNA-binding transcription factor activity"/>
    <property type="evidence" value="ECO:0007669"/>
    <property type="project" value="UniProtKB-UniRule"/>
</dbReference>
<dbReference type="GO" id="GO:0045892">
    <property type="term" value="P:negative regulation of DNA-templated transcription"/>
    <property type="evidence" value="ECO:0007669"/>
    <property type="project" value="UniProtKB-UniRule"/>
</dbReference>
<dbReference type="FunFam" id="1.10.10.10:FF:000001">
    <property type="entry name" value="LysR family transcriptional regulator"/>
    <property type="match status" value="1"/>
</dbReference>
<dbReference type="Gene3D" id="3.40.190.10">
    <property type="entry name" value="Periplasmic binding protein-like II"/>
    <property type="match status" value="2"/>
</dbReference>
<dbReference type="Gene3D" id="1.10.10.10">
    <property type="entry name" value="Winged helix-like DNA-binding domain superfamily/Winged helix DNA-binding domain"/>
    <property type="match status" value="1"/>
</dbReference>
<dbReference type="HAMAP" id="MF_01233">
    <property type="entry name" value="HTH_type_HdfR"/>
    <property type="match status" value="1"/>
</dbReference>
<dbReference type="InterPro" id="IPR050176">
    <property type="entry name" value="LTTR"/>
</dbReference>
<dbReference type="InterPro" id="IPR005119">
    <property type="entry name" value="LysR_subst-bd"/>
</dbReference>
<dbReference type="InterPro" id="IPR020890">
    <property type="entry name" value="Tscrpt_reg_HTH_HdfR"/>
</dbReference>
<dbReference type="InterPro" id="IPR000847">
    <property type="entry name" value="Tscrpt_reg_HTH_LysR"/>
</dbReference>
<dbReference type="InterPro" id="IPR036388">
    <property type="entry name" value="WH-like_DNA-bd_sf"/>
</dbReference>
<dbReference type="InterPro" id="IPR036390">
    <property type="entry name" value="WH_DNA-bd_sf"/>
</dbReference>
<dbReference type="NCBIfam" id="NF002946">
    <property type="entry name" value="PRK03601.1"/>
    <property type="match status" value="1"/>
</dbReference>
<dbReference type="PANTHER" id="PTHR30579:SF8">
    <property type="entry name" value="HTH-TYPE TRANSCRIPTIONAL REGULATOR HDFR"/>
    <property type="match status" value="1"/>
</dbReference>
<dbReference type="PANTHER" id="PTHR30579">
    <property type="entry name" value="TRANSCRIPTIONAL REGULATOR"/>
    <property type="match status" value="1"/>
</dbReference>
<dbReference type="Pfam" id="PF00126">
    <property type="entry name" value="HTH_1"/>
    <property type="match status" value="1"/>
</dbReference>
<dbReference type="Pfam" id="PF03466">
    <property type="entry name" value="LysR_substrate"/>
    <property type="match status" value="1"/>
</dbReference>
<dbReference type="PRINTS" id="PR00039">
    <property type="entry name" value="HTHLYSR"/>
</dbReference>
<dbReference type="SUPFAM" id="SSF53850">
    <property type="entry name" value="Periplasmic binding protein-like II"/>
    <property type="match status" value="1"/>
</dbReference>
<dbReference type="SUPFAM" id="SSF46785">
    <property type="entry name" value="Winged helix' DNA-binding domain"/>
    <property type="match status" value="1"/>
</dbReference>
<dbReference type="PROSITE" id="PS50931">
    <property type="entry name" value="HTH_LYSR"/>
    <property type="match status" value="1"/>
</dbReference>
<keyword id="KW-0238">DNA-binding</keyword>
<keyword id="KW-0678">Repressor</keyword>
<keyword id="KW-0804">Transcription</keyword>
<keyword id="KW-0805">Transcription regulation</keyword>